<keyword id="KW-0238">DNA-binding</keyword>
<keyword id="KW-0539">Nucleus</keyword>
<keyword id="KW-0804">Transcription</keyword>
<keyword id="KW-0805">Transcription regulation</keyword>
<feature type="chain" id="PRO_0000413442" description="Protein Barley B recombinant">
    <location>
        <begin position="1"/>
        <end position="350"/>
    </location>
</feature>
<feature type="region of interest" description="Disordered" evidence="2">
    <location>
        <begin position="43"/>
        <end position="74"/>
    </location>
</feature>
<feature type="region of interest" description="Disordered" evidence="2">
    <location>
        <begin position="93"/>
        <end position="125"/>
    </location>
</feature>
<feature type="region of interest" description="Disordered" evidence="2">
    <location>
        <begin position="137"/>
        <end position="241"/>
    </location>
</feature>
<feature type="short sequence motif" description="Bipartite nuclear localization signal" evidence="1">
    <location>
        <begin position="199"/>
        <end position="219"/>
    </location>
</feature>
<feature type="compositionally biased region" description="Basic residues" evidence="2">
    <location>
        <begin position="51"/>
        <end position="61"/>
    </location>
</feature>
<feature type="compositionally biased region" description="Basic residues" evidence="2">
    <location>
        <begin position="96"/>
        <end position="122"/>
    </location>
</feature>
<feature type="compositionally biased region" description="Basic and acidic residues" evidence="2">
    <location>
        <begin position="179"/>
        <end position="192"/>
    </location>
</feature>
<feature type="compositionally biased region" description="Basic residues" evidence="2">
    <location>
        <begin position="199"/>
        <end position="218"/>
    </location>
</feature>
<protein>
    <recommendedName>
        <fullName>Protein Barley B recombinant</fullName>
        <shortName>Protein BBR</shortName>
    </recommendedName>
</protein>
<organism>
    <name type="scientific">Hordeum vulgare</name>
    <name type="common">Barley</name>
    <dbReference type="NCBI Taxonomy" id="4513"/>
    <lineage>
        <taxon>Eukaryota</taxon>
        <taxon>Viridiplantae</taxon>
        <taxon>Streptophyta</taxon>
        <taxon>Embryophyta</taxon>
        <taxon>Tracheophyta</taxon>
        <taxon>Spermatophyta</taxon>
        <taxon>Magnoliopsida</taxon>
        <taxon>Liliopsida</taxon>
        <taxon>Poales</taxon>
        <taxon>Poaceae</taxon>
        <taxon>BOP clade</taxon>
        <taxon>Pooideae</taxon>
        <taxon>Triticodae</taxon>
        <taxon>Triticeae</taxon>
        <taxon>Hordeinae</taxon>
        <taxon>Hordeum</taxon>
    </lineage>
</organism>
<name>BBR_HORVU</name>
<gene>
    <name type="primary">BBR</name>
</gene>
<comment type="function">
    <text evidence="3">Transcriptional regulator that specifically binds to GA-rich elements (GAGA-repeats) present in regulatory sequences of genes involved in developmental processes. Positively regulates the homeotic gene BKN3.</text>
</comment>
<comment type="subcellular location">
    <subcellularLocation>
        <location evidence="3">Nucleus</location>
    </subcellularLocation>
</comment>
<comment type="tissue specificity">
    <text evidence="3">Ubiquitously expressed.</text>
</comment>
<comment type="similarity">
    <text evidence="4">Belongs to the BBR/BPC family.</text>
</comment>
<accession>Q8GUC3</accession>
<sequence>MDDDGSLSIRNWGFYETMKGNLGLQLMPSVTGGHRDTKPLLPNGTFLQHHTPPHHPPHSHHPRDYGNGEPSGGMPAEPPAIHMDFVRNEAWMHPSQHQHQHQHQHQHQHQHQHQLQHQHQHQHSRELKVLNAVPVGPAPHIGHPGHAVHHHPTGFGMMPDARGAHTLQMMQPQEPPVPDEEKITPPLVEDHSVVGSKPPVKKRQQGRQPKVPKPKKPKKDATPGEDGAPKARAPRSRGPLKPVEMVINGIDFDISRIPTPVCSCTGAPQQCYRWGAGGWQSACCTTSISTYPLPMNTKRRGARIAGRKMSQGAFKKVLEKLAGEGYNLNNPIDLKTFWAKHGTNKFVTIR</sequence>
<proteinExistence type="evidence at protein level"/>
<reference key="1">
    <citation type="journal article" date="2003" name="Plant J.">
        <title>The GA octodinucleotide repeat binding factor BBR participates in the transcriptional regulation of the homeobox gene Bkn3.</title>
        <authorList>
            <person name="Santi L."/>
            <person name="Wang Y."/>
            <person name="Stile M.R."/>
            <person name="Berendzen K.W."/>
            <person name="Wanke D."/>
            <person name="Roig C."/>
            <person name="Pozzi C."/>
            <person name="Mueller K."/>
            <person name="Mueller J."/>
            <person name="Rohde W."/>
            <person name="Salamini F."/>
        </authorList>
    </citation>
    <scope>NUCLEOTIDE SEQUENCE [GENOMIC DNA]</scope>
    <scope>FUNCTION</scope>
    <scope>DNA-BINDING</scope>
    <scope>TISSUE SPECIFICITY</scope>
    <scope>SUBCELLULAR LOCATION</scope>
</reference>
<dbReference type="EMBL" id="AJ507214">
    <property type="protein sequence ID" value="CAD45251.1"/>
    <property type="molecule type" value="Genomic_DNA"/>
</dbReference>
<dbReference type="SMR" id="Q8GUC3"/>
<dbReference type="ExpressionAtlas" id="Q8GUC3">
    <property type="expression patterns" value="baseline and differential"/>
</dbReference>
<dbReference type="GO" id="GO:0005634">
    <property type="term" value="C:nucleus"/>
    <property type="evidence" value="ECO:0000314"/>
    <property type="project" value="UniProtKB"/>
</dbReference>
<dbReference type="GO" id="GO:0003700">
    <property type="term" value="F:DNA-binding transcription factor activity"/>
    <property type="evidence" value="ECO:0000314"/>
    <property type="project" value="UniProtKB"/>
</dbReference>
<dbReference type="GO" id="GO:0043565">
    <property type="term" value="F:sequence-specific DNA binding"/>
    <property type="evidence" value="ECO:0007669"/>
    <property type="project" value="TreeGrafter"/>
</dbReference>
<dbReference type="GO" id="GO:0006355">
    <property type="term" value="P:regulation of DNA-templated transcription"/>
    <property type="evidence" value="ECO:0000314"/>
    <property type="project" value="UniProtKB"/>
</dbReference>
<dbReference type="GO" id="GO:0009723">
    <property type="term" value="P:response to ethylene"/>
    <property type="evidence" value="ECO:0007669"/>
    <property type="project" value="TreeGrafter"/>
</dbReference>
<dbReference type="InterPro" id="IPR010409">
    <property type="entry name" value="GAGA-bd_tscrpt_act"/>
</dbReference>
<dbReference type="PANTHER" id="PTHR31421">
    <property type="entry name" value="PROTEIN BASIC PENTACYSTEINE3"/>
    <property type="match status" value="1"/>
</dbReference>
<dbReference type="PANTHER" id="PTHR31421:SF22">
    <property type="entry name" value="PROTEIN BASIC PENTACYSTEINE3"/>
    <property type="match status" value="1"/>
</dbReference>
<dbReference type="Pfam" id="PF06217">
    <property type="entry name" value="GAGA_bind"/>
    <property type="match status" value="1"/>
</dbReference>
<dbReference type="SMART" id="SM01226">
    <property type="entry name" value="GAGA_bind"/>
    <property type="match status" value="1"/>
</dbReference>
<evidence type="ECO:0000255" key="1"/>
<evidence type="ECO:0000256" key="2">
    <source>
        <dbReference type="SAM" id="MobiDB-lite"/>
    </source>
</evidence>
<evidence type="ECO:0000269" key="3">
    <source>
    </source>
</evidence>
<evidence type="ECO:0000305" key="4"/>